<comment type="function">
    <text evidence="1">Endonuclease that specifically degrades the RNA of RNA-DNA hybrids.</text>
</comment>
<comment type="catalytic activity">
    <reaction evidence="1">
        <text>Endonucleolytic cleavage to 5'-phosphomonoester.</text>
        <dbReference type="EC" id="3.1.26.4"/>
    </reaction>
</comment>
<comment type="cofactor">
    <cofactor evidence="1">
        <name>Mg(2+)</name>
        <dbReference type="ChEBI" id="CHEBI:18420"/>
    </cofactor>
    <text evidence="1">Binds 1 Mg(2+) ion per subunit. May bind a second metal ion at a regulatory site, or after substrate binding.</text>
</comment>
<comment type="subunit">
    <text evidence="1">Monomer.</text>
</comment>
<comment type="subcellular location">
    <subcellularLocation>
        <location evidence="1">Cytoplasm</location>
    </subcellularLocation>
</comment>
<comment type="similarity">
    <text evidence="1">Belongs to the RNase H family.</text>
</comment>
<dbReference type="EC" id="3.1.26.4" evidence="1"/>
<dbReference type="EMBL" id="CP001144">
    <property type="protein sequence ID" value="ACH74122.1"/>
    <property type="molecule type" value="Genomic_DNA"/>
</dbReference>
<dbReference type="RefSeq" id="WP_000917872.1">
    <property type="nucleotide sequence ID" value="NC_011205.1"/>
</dbReference>
<dbReference type="SMR" id="B5FJ58"/>
<dbReference type="KEGG" id="sed:SeD_A0286"/>
<dbReference type="HOGENOM" id="CLU_030894_6_0_6"/>
<dbReference type="Proteomes" id="UP000008322">
    <property type="component" value="Chromosome"/>
</dbReference>
<dbReference type="GO" id="GO:0005737">
    <property type="term" value="C:cytoplasm"/>
    <property type="evidence" value="ECO:0007669"/>
    <property type="project" value="UniProtKB-SubCell"/>
</dbReference>
<dbReference type="GO" id="GO:0000287">
    <property type="term" value="F:magnesium ion binding"/>
    <property type="evidence" value="ECO:0007669"/>
    <property type="project" value="UniProtKB-UniRule"/>
</dbReference>
<dbReference type="GO" id="GO:0003676">
    <property type="term" value="F:nucleic acid binding"/>
    <property type="evidence" value="ECO:0007669"/>
    <property type="project" value="InterPro"/>
</dbReference>
<dbReference type="GO" id="GO:0004523">
    <property type="term" value="F:RNA-DNA hybrid ribonuclease activity"/>
    <property type="evidence" value="ECO:0007669"/>
    <property type="project" value="UniProtKB-UniRule"/>
</dbReference>
<dbReference type="GO" id="GO:0043137">
    <property type="term" value="P:DNA replication, removal of RNA primer"/>
    <property type="evidence" value="ECO:0007669"/>
    <property type="project" value="TreeGrafter"/>
</dbReference>
<dbReference type="CDD" id="cd09278">
    <property type="entry name" value="RNase_HI_prokaryote_like"/>
    <property type="match status" value="1"/>
</dbReference>
<dbReference type="FunFam" id="3.30.420.10:FF:000008">
    <property type="entry name" value="Ribonuclease H"/>
    <property type="match status" value="1"/>
</dbReference>
<dbReference type="Gene3D" id="3.30.420.10">
    <property type="entry name" value="Ribonuclease H-like superfamily/Ribonuclease H"/>
    <property type="match status" value="1"/>
</dbReference>
<dbReference type="HAMAP" id="MF_00042">
    <property type="entry name" value="RNase_H"/>
    <property type="match status" value="1"/>
</dbReference>
<dbReference type="InterPro" id="IPR050092">
    <property type="entry name" value="RNase_H"/>
</dbReference>
<dbReference type="InterPro" id="IPR012337">
    <property type="entry name" value="RNaseH-like_sf"/>
</dbReference>
<dbReference type="InterPro" id="IPR002156">
    <property type="entry name" value="RNaseH_domain"/>
</dbReference>
<dbReference type="InterPro" id="IPR036397">
    <property type="entry name" value="RNaseH_sf"/>
</dbReference>
<dbReference type="InterPro" id="IPR022892">
    <property type="entry name" value="RNaseHI"/>
</dbReference>
<dbReference type="NCBIfam" id="NF001236">
    <property type="entry name" value="PRK00203.1"/>
    <property type="match status" value="1"/>
</dbReference>
<dbReference type="PANTHER" id="PTHR10642">
    <property type="entry name" value="RIBONUCLEASE H1"/>
    <property type="match status" value="1"/>
</dbReference>
<dbReference type="PANTHER" id="PTHR10642:SF26">
    <property type="entry name" value="RIBONUCLEASE H1"/>
    <property type="match status" value="1"/>
</dbReference>
<dbReference type="Pfam" id="PF00075">
    <property type="entry name" value="RNase_H"/>
    <property type="match status" value="1"/>
</dbReference>
<dbReference type="SUPFAM" id="SSF53098">
    <property type="entry name" value="Ribonuclease H-like"/>
    <property type="match status" value="1"/>
</dbReference>
<dbReference type="PROSITE" id="PS50879">
    <property type="entry name" value="RNASE_H_1"/>
    <property type="match status" value="1"/>
</dbReference>
<proteinExistence type="inferred from homology"/>
<accession>B5FJ58</accession>
<protein>
    <recommendedName>
        <fullName evidence="1">Ribonuclease H</fullName>
        <shortName evidence="1">RNase H</shortName>
        <ecNumber evidence="1">3.1.26.4</ecNumber>
    </recommendedName>
</protein>
<gene>
    <name evidence="1" type="primary">rnhA</name>
    <name type="ordered locus">SeD_A0286</name>
</gene>
<sequence length="155" mass="17510">MLKQVEIFTDGSCLGNPGPGGYGAILRYRGHEKTFSEGYTLTTNNRMELMAAIVALEALKEHCEVTLSTDSQYVRQGITQWIHNWKKRGWKTAEKKPVKNVDLWKRLDAALGQHQIKWVWVKGHAGHPENERCDELARAAAMNPTQEDSGYQAEA</sequence>
<reference key="1">
    <citation type="journal article" date="2011" name="J. Bacteriol.">
        <title>Comparative genomics of 28 Salmonella enterica isolates: evidence for CRISPR-mediated adaptive sublineage evolution.</title>
        <authorList>
            <person name="Fricke W.F."/>
            <person name="Mammel M.K."/>
            <person name="McDermott P.F."/>
            <person name="Tartera C."/>
            <person name="White D.G."/>
            <person name="Leclerc J.E."/>
            <person name="Ravel J."/>
            <person name="Cebula T.A."/>
        </authorList>
    </citation>
    <scope>NUCLEOTIDE SEQUENCE [LARGE SCALE GENOMIC DNA]</scope>
    <source>
        <strain>CT_02021853</strain>
    </source>
</reference>
<keyword id="KW-0963">Cytoplasm</keyword>
<keyword id="KW-0255">Endonuclease</keyword>
<keyword id="KW-0378">Hydrolase</keyword>
<keyword id="KW-0460">Magnesium</keyword>
<keyword id="KW-0479">Metal-binding</keyword>
<keyword id="KW-0540">Nuclease</keyword>
<name>RNH_SALDC</name>
<organism>
    <name type="scientific">Salmonella dublin (strain CT_02021853)</name>
    <dbReference type="NCBI Taxonomy" id="439851"/>
    <lineage>
        <taxon>Bacteria</taxon>
        <taxon>Pseudomonadati</taxon>
        <taxon>Pseudomonadota</taxon>
        <taxon>Gammaproteobacteria</taxon>
        <taxon>Enterobacterales</taxon>
        <taxon>Enterobacteriaceae</taxon>
        <taxon>Salmonella</taxon>
    </lineage>
</organism>
<evidence type="ECO:0000255" key="1">
    <source>
        <dbReference type="HAMAP-Rule" id="MF_00042"/>
    </source>
</evidence>
<evidence type="ECO:0000255" key="2">
    <source>
        <dbReference type="PROSITE-ProRule" id="PRU00408"/>
    </source>
</evidence>
<feature type="chain" id="PRO_1000090912" description="Ribonuclease H">
    <location>
        <begin position="1"/>
        <end position="155"/>
    </location>
</feature>
<feature type="domain" description="RNase H type-1" evidence="2">
    <location>
        <begin position="1"/>
        <end position="142"/>
    </location>
</feature>
<feature type="binding site" evidence="1">
    <location>
        <position position="10"/>
    </location>
    <ligand>
        <name>Mg(2+)</name>
        <dbReference type="ChEBI" id="CHEBI:18420"/>
        <label>1</label>
    </ligand>
</feature>
<feature type="binding site" evidence="1">
    <location>
        <position position="10"/>
    </location>
    <ligand>
        <name>Mg(2+)</name>
        <dbReference type="ChEBI" id="CHEBI:18420"/>
        <label>2</label>
    </ligand>
</feature>
<feature type="binding site" evidence="1">
    <location>
        <position position="48"/>
    </location>
    <ligand>
        <name>Mg(2+)</name>
        <dbReference type="ChEBI" id="CHEBI:18420"/>
        <label>1</label>
    </ligand>
</feature>
<feature type="binding site" evidence="1">
    <location>
        <position position="70"/>
    </location>
    <ligand>
        <name>Mg(2+)</name>
        <dbReference type="ChEBI" id="CHEBI:18420"/>
        <label>1</label>
    </ligand>
</feature>
<feature type="binding site" evidence="1">
    <location>
        <position position="134"/>
    </location>
    <ligand>
        <name>Mg(2+)</name>
        <dbReference type="ChEBI" id="CHEBI:18420"/>
        <label>2</label>
    </ligand>
</feature>